<protein>
    <recommendedName>
        <fullName evidence="1">Large ribosomal subunit protein bL17</fullName>
    </recommendedName>
    <alternativeName>
        <fullName evidence="2">50S ribosomal protein L17</fullName>
    </alternativeName>
</protein>
<comment type="subunit">
    <text evidence="1">Part of the 50S ribosomal subunit. Contacts protein L32.</text>
</comment>
<comment type="similarity">
    <text evidence="1">Belongs to the bacterial ribosomal protein bL17 family.</text>
</comment>
<feature type="chain" id="PRO_0000267881" description="Large ribosomal subunit protein bL17">
    <location>
        <begin position="1"/>
        <end position="129"/>
    </location>
</feature>
<organism>
    <name type="scientific">Hahella chejuensis (strain KCTC 2396)</name>
    <dbReference type="NCBI Taxonomy" id="349521"/>
    <lineage>
        <taxon>Bacteria</taxon>
        <taxon>Pseudomonadati</taxon>
        <taxon>Pseudomonadota</taxon>
        <taxon>Gammaproteobacteria</taxon>
        <taxon>Oceanospirillales</taxon>
        <taxon>Hahellaceae</taxon>
        <taxon>Hahella</taxon>
    </lineage>
</organism>
<keyword id="KW-1185">Reference proteome</keyword>
<keyword id="KW-0687">Ribonucleoprotein</keyword>
<keyword id="KW-0689">Ribosomal protein</keyword>
<evidence type="ECO:0000255" key="1">
    <source>
        <dbReference type="HAMAP-Rule" id="MF_01368"/>
    </source>
</evidence>
<evidence type="ECO:0000305" key="2"/>
<proteinExistence type="inferred from homology"/>
<gene>
    <name evidence="1" type="primary">rplQ</name>
    <name type="ordered locus">HCH_06192</name>
</gene>
<accession>Q2S938</accession>
<reference key="1">
    <citation type="journal article" date="2005" name="Nucleic Acids Res.">
        <title>Genomic blueprint of Hahella chejuensis, a marine microbe producing an algicidal agent.</title>
        <authorList>
            <person name="Jeong H."/>
            <person name="Yim J.H."/>
            <person name="Lee C."/>
            <person name="Choi S.-H."/>
            <person name="Park Y.K."/>
            <person name="Yoon S.H."/>
            <person name="Hur C.-G."/>
            <person name="Kang H.-Y."/>
            <person name="Kim D."/>
            <person name="Lee H.H."/>
            <person name="Park K.H."/>
            <person name="Park S.-H."/>
            <person name="Park H.-S."/>
            <person name="Lee H.K."/>
            <person name="Oh T.K."/>
            <person name="Kim J.F."/>
        </authorList>
    </citation>
    <scope>NUCLEOTIDE SEQUENCE [LARGE SCALE GENOMIC DNA]</scope>
    <source>
        <strain>KCTC 2396</strain>
    </source>
</reference>
<sequence>MRHRKSGRKFNRTSAHRKSMFRNMAASLVEHELIKTTVPKAKELRRVAEPLITLAKSDSVANRRLAFSRLRSRDAVTKLFEEIGPRYKDRPGGYLRILKCGLRPGDSAPMAFVELVDRPVVEAEGDNEE</sequence>
<name>RL17_HAHCH</name>
<dbReference type="EMBL" id="CP000155">
    <property type="protein sequence ID" value="ABC32836.1"/>
    <property type="molecule type" value="Genomic_DNA"/>
</dbReference>
<dbReference type="RefSeq" id="WP_011399894.1">
    <property type="nucleotide sequence ID" value="NC_007645.1"/>
</dbReference>
<dbReference type="SMR" id="Q2S938"/>
<dbReference type="STRING" id="349521.HCH_06192"/>
<dbReference type="KEGG" id="hch:HCH_06192"/>
<dbReference type="eggNOG" id="COG0203">
    <property type="taxonomic scope" value="Bacteria"/>
</dbReference>
<dbReference type="HOGENOM" id="CLU_074407_2_0_6"/>
<dbReference type="OrthoDB" id="9809073at2"/>
<dbReference type="Proteomes" id="UP000000238">
    <property type="component" value="Chromosome"/>
</dbReference>
<dbReference type="GO" id="GO:0022625">
    <property type="term" value="C:cytosolic large ribosomal subunit"/>
    <property type="evidence" value="ECO:0007669"/>
    <property type="project" value="TreeGrafter"/>
</dbReference>
<dbReference type="GO" id="GO:0003735">
    <property type="term" value="F:structural constituent of ribosome"/>
    <property type="evidence" value="ECO:0007669"/>
    <property type="project" value="InterPro"/>
</dbReference>
<dbReference type="GO" id="GO:0006412">
    <property type="term" value="P:translation"/>
    <property type="evidence" value="ECO:0007669"/>
    <property type="project" value="UniProtKB-UniRule"/>
</dbReference>
<dbReference type="FunFam" id="3.90.1030.10:FF:000001">
    <property type="entry name" value="50S ribosomal protein L17"/>
    <property type="match status" value="1"/>
</dbReference>
<dbReference type="Gene3D" id="3.90.1030.10">
    <property type="entry name" value="Ribosomal protein L17"/>
    <property type="match status" value="1"/>
</dbReference>
<dbReference type="HAMAP" id="MF_01368">
    <property type="entry name" value="Ribosomal_bL17"/>
    <property type="match status" value="1"/>
</dbReference>
<dbReference type="InterPro" id="IPR000456">
    <property type="entry name" value="Ribosomal_bL17"/>
</dbReference>
<dbReference type="InterPro" id="IPR047859">
    <property type="entry name" value="Ribosomal_bL17_CS"/>
</dbReference>
<dbReference type="InterPro" id="IPR036373">
    <property type="entry name" value="Ribosomal_bL17_sf"/>
</dbReference>
<dbReference type="NCBIfam" id="TIGR00059">
    <property type="entry name" value="L17"/>
    <property type="match status" value="1"/>
</dbReference>
<dbReference type="PANTHER" id="PTHR14413:SF16">
    <property type="entry name" value="LARGE RIBOSOMAL SUBUNIT PROTEIN BL17M"/>
    <property type="match status" value="1"/>
</dbReference>
<dbReference type="PANTHER" id="PTHR14413">
    <property type="entry name" value="RIBOSOMAL PROTEIN L17"/>
    <property type="match status" value="1"/>
</dbReference>
<dbReference type="Pfam" id="PF01196">
    <property type="entry name" value="Ribosomal_L17"/>
    <property type="match status" value="1"/>
</dbReference>
<dbReference type="SUPFAM" id="SSF64263">
    <property type="entry name" value="Prokaryotic ribosomal protein L17"/>
    <property type="match status" value="1"/>
</dbReference>
<dbReference type="PROSITE" id="PS01167">
    <property type="entry name" value="RIBOSOMAL_L17"/>
    <property type="match status" value="1"/>
</dbReference>